<name>CLOT_PENMO</name>
<protein>
    <recommendedName>
        <fullName>Hemolymph clottable protein</fullName>
    </recommendedName>
</protein>
<sequence>MKALILLLLGACQALQPGLEYQYRYSARVASGIPSINRQFAAAGIQADVTVQMAADYSVVVQFSNIEVGDLNKVLDCDLRAPLPIEYHPLEDYVDLLEKPFRVIMNESHVPSYMEGPEEPIWISNVRKGFVNIFRVPLFWSTELHSTKLNYGAVEETLVGRCQNWYTSMKLPVNLAEEVNVQREHFMEEDIQRDAYSSSYTTKTKSKTSSKTSSKTSSKTSSKTSKTGKTSPGQLANVPHIEDTLWSVRRTTDFDMCENLVSLQIHSSKYTEDIIQRSSVASYLIRGDTHRRIEQVVVEGTITVLTNKEQHEHVDTFTNQTLELKAVREVGEPITVTYDVHPHYDWQYDIERPQGDQFIPLEQVLTGRPVTDQIVNSIMEYIKKTVDDLSHRMEHYPAKPENLAYIIGRLVEAVANLDYPYIQTLYTHFDGKGTMQKYIFVQLVIHAGTEPAVNFAVDNLSDILFYVTFYESIGVSLRTPAPIPKIMHSLINGEEGLHHSLGLMNFATLAHDACLSEDRKHFYFDYSCGPKTTCDPELIITNFIPYLVRELGNQGKDVWQRLIYLQALSNLGTPQTINVLKPIILGVTETNIFMRTNAIWSLSAYNMHKTALSQIYEILMPIIENKGEQFEIRNIAFLTLATWGPGHAWWQQLAVSTWHDPSPQFANFVTTTIYSISDSHTKLAETVSRIKHLCKPAAPASILHSTNFFLHEYLFSEEHGSRVNFAWFASVHGAIPEEVFLRIQREFFYGYTKVLKIDGQQRGLYNLMQLMKQKMTKPQKRPQSSAQEIVSGMWEELKEKIGFTSPESASDATLWLKLDRLIYVALQYHFMEGAPIPYGMYSGKPFYDKDLNTLIAFPTEIGIPFSVLYVAEDATWLNINGNPETSMTSGKMKVNVDFIFETSQVQFVDARAHVPWSKRPAVASGVYADTQLVLPLNVHASFDMYSQEIQLSIEPTNTQKIDVIKFEFIPYTVLENNYPGDVLVIENEYKPILHGEVPLFNDKHQAFPSDVGLWIQVATEGDIHHTPSIYEIITQLFSAHTSTHIWEQSIVFDPTLSTTKTVSFTFNYVSTGGSGSLVDRGDYDDGQISQGSFDEDFGQFSQVAGGSDQDIMEVDSFGTQSQTIERIMRLQQALISSGGHVRTISVEVELQGTPTRNYEASLTWAISSSASTRSSKVQVTLIKHPAVGVLEDPYTICLNAQIVKPHFNPFFTTEDVLTANYHSTVKAELFEGETCEEAPVLLLEASFDVSSNVKERVKEAIEKGCDYSTYAPGIDIITSPLYDHSHITATWTPDFPDNLKNITYYVDDIIKASLSKKIEFDHTSAHHASRVEIDATKCIETGLWTVRTEKPYAVSIINELELPAWANPIFTPAPLATTLLYGLTVGRTPVSCTIDETKVRTADGKVFAYEPSECWNAMTLDTTFDQRGAMLVRNTGQWEVRIIWQKEGLVIDMSPTNFLVNGEPAKGTDNRYTVLHHDDSHTIVFESGTSVKVSDKVEVLLGLDHRGHTTGICGNFDGEPSNDMVGPKGCYYTDGPLFALSWASPGEGCASFMYKNLKRDVVWYQENCPHFTYEPTGVTHADALYDCTEWVYHQRTEGQYHCKALSPMPVCRPECVASHPITTSVEYECRFSGHQQQAQQQQQQQVQGTQWEECFPHFYTLTYPSSCIPQ</sequence>
<accession>Q9U572</accession>
<reference evidence="7" key="1">
    <citation type="journal article" date="1999" name="Eur. J. Biochem.">
        <title>Molecular cloning and characterization of a hemolymph clottable protein from tiger shrimp (Penaeus monodon).</title>
        <authorList>
            <person name="Yeh M.-S."/>
            <person name="Huang C.-J."/>
            <person name="Leu J.-H."/>
            <person name="Lee Y.C."/>
            <person name="Tsai I.-H."/>
        </authorList>
    </citation>
    <scope>NUCLEOTIDE SEQUENCE [MRNA]</scope>
    <scope>PROTEIN SEQUENCE OF 54-76; 129-144; 149-163; 170-185; 230-249; 486-497; 692-711; 781-799; 1259-1278 AND 1637-1656</scope>
    <scope>TISSUE SPECIFICITY</scope>
    <scope>GLYCOSYLATION</scope>
    <source>
        <tissue>Hemolymph</tissue>
    </source>
</reference>
<reference evidence="7" key="2">
    <citation type="journal article" date="1998" name="Comp. Biochem. Physiol.">
        <title>The hemolymph clottable proteins of tiger shrimp, Penaeus monodon, and related species.</title>
        <authorList>
            <person name="Yeh M.-S."/>
            <person name="Chen Y.-L."/>
            <person name="Tsai I.-H."/>
        </authorList>
    </citation>
    <scope>PROTEIN SEQUENCE OF 15-44</scope>
    <scope>SUBUNIT</scope>
    <scope>MASS SPECTROMETRY</scope>
    <source>
        <tissue>Hemolymph</tissue>
    </source>
</reference>
<evidence type="ECO:0000255" key="1"/>
<evidence type="ECO:0000255" key="2">
    <source>
        <dbReference type="PROSITE-ProRule" id="PRU00557"/>
    </source>
</evidence>
<evidence type="ECO:0000255" key="3">
    <source>
        <dbReference type="PROSITE-ProRule" id="PRU00580"/>
    </source>
</evidence>
<evidence type="ECO:0000256" key="4">
    <source>
        <dbReference type="SAM" id="MobiDB-lite"/>
    </source>
</evidence>
<evidence type="ECO:0000269" key="5">
    <source>
    </source>
</evidence>
<evidence type="ECO:0000269" key="6">
    <source>
    </source>
</evidence>
<evidence type="ECO:0000305" key="7"/>
<evidence type="ECO:0000312" key="8">
    <source>
        <dbReference type="EMBL" id="AAF19002.1"/>
    </source>
</evidence>
<feature type="signal peptide" evidence="6">
    <location>
        <begin position="1"/>
        <end position="14"/>
    </location>
</feature>
<feature type="chain" id="PRO_0000041591" description="Hemolymph clottable protein">
    <location>
        <begin position="15"/>
        <end position="1670"/>
    </location>
</feature>
<feature type="domain" description="Vitellogenin" evidence="2">
    <location>
        <begin position="15"/>
        <end position="764"/>
    </location>
</feature>
<feature type="domain" description="VWFD" evidence="3">
    <location>
        <begin position="1390"/>
        <end position="1550"/>
    </location>
</feature>
<feature type="region of interest" description="Vittelogenin">
    <location>
        <begin position="15"/>
        <end position="674"/>
    </location>
</feature>
<feature type="region of interest" description="Disordered" evidence="4">
    <location>
        <begin position="198"/>
        <end position="236"/>
    </location>
</feature>
<feature type="compositionally biased region" description="Low complexity" evidence="4">
    <location>
        <begin position="198"/>
        <end position="231"/>
    </location>
</feature>
<feature type="glycosylation site" description="N-linked (GlcNAc...) asparagine" evidence="1">
    <location>
        <position position="106"/>
    </location>
</feature>
<feature type="glycosylation site" description="N-linked (GlcNAc...) asparagine" evidence="1">
    <location>
        <position position="319"/>
    </location>
</feature>
<feature type="glycosylation site" description="N-linked (GlcNAc...) asparagine" evidence="1">
    <location>
        <position position="459"/>
    </location>
</feature>
<feature type="glycosylation site" description="N-linked (GlcNAc...) asparagine" evidence="1">
    <location>
        <position position="1301"/>
    </location>
</feature>
<feature type="disulfide bond" evidence="3">
    <location>
        <begin position="1392"/>
        <end position="1513"/>
    </location>
</feature>
<feature type="disulfide bond" evidence="3">
    <location>
        <begin position="1414"/>
        <end position="1549"/>
    </location>
</feature>
<feature type="sequence conflict" description="In Ref. 2; AA sequence." evidence="7" ref="2">
    <original>A</original>
    <variation>L</variation>
    <location>
        <position position="42"/>
    </location>
</feature>
<feature type="sequence conflict" description="In Ref. 2; AA sequence." evidence="7" ref="2">
    <original>G</original>
    <variation>D</variation>
    <location>
        <position position="44"/>
    </location>
</feature>
<feature type="sequence conflict" description="In Ref. 1; AA sequence." evidence="7" ref="1">
    <original>LD</original>
    <variation>DL</variation>
    <location>
        <begin position="75"/>
        <end position="76"/>
    </location>
</feature>
<feature type="sequence conflict" description="In Ref. 1; AA sequence." evidence="7" ref="1">
    <original>H</original>
    <variation>Y</variation>
    <location>
        <position position="704"/>
    </location>
</feature>
<feature type="sequence conflict" description="In Ref. 1; AA sequence." evidence="7" ref="1">
    <original>Q</original>
    <variation>K</variation>
    <location>
        <position position="1640"/>
    </location>
</feature>
<feature type="sequence conflict" description="In Ref. 1; AA sequence." evidence="7" ref="1">
    <original>Q</original>
    <variation>T</variation>
    <location>
        <position position="1642"/>
    </location>
</feature>
<keyword id="KW-0903">Direct protein sequencing</keyword>
<keyword id="KW-1015">Disulfide bond</keyword>
<keyword id="KW-0325">Glycoprotein</keyword>
<keyword id="KW-0353">Hemolymph clotting</keyword>
<keyword id="KW-0964">Secreted</keyword>
<keyword id="KW-0732">Signal</keyword>
<organism evidence="8">
    <name type="scientific">Penaeus monodon</name>
    <name type="common">Giant tiger prawn</name>
    <dbReference type="NCBI Taxonomy" id="6687"/>
    <lineage>
        <taxon>Eukaryota</taxon>
        <taxon>Metazoa</taxon>
        <taxon>Ecdysozoa</taxon>
        <taxon>Arthropoda</taxon>
        <taxon>Crustacea</taxon>
        <taxon>Multicrustacea</taxon>
        <taxon>Malacostraca</taxon>
        <taxon>Eumalacostraca</taxon>
        <taxon>Eucarida</taxon>
        <taxon>Decapoda</taxon>
        <taxon>Dendrobranchiata</taxon>
        <taxon>Penaeoidea</taxon>
        <taxon>Penaeidae</taxon>
        <taxon>Penaeus</taxon>
    </lineage>
</organism>
<comment type="function">
    <text evidence="6">Forms stable clots in the presence of calcium.</text>
</comment>
<comment type="subunit">
    <text evidence="6">Homodimer; disulfide-linked. Also exists as oligomers.</text>
</comment>
<comment type="subcellular location">
    <subcellularLocation>
        <location>Secreted</location>
    </subcellularLocation>
    <text>Secreted in hemolymph.</text>
</comment>
<comment type="tissue specificity">
    <text evidence="5">Widely expressed with highest levels in gill and heart. Not expressed in hemocytes.</text>
</comment>
<comment type="PTM">
    <text evidence="5">Glycosylated. Contains mannose and N-acetylglucosamine.</text>
</comment>
<comment type="PTM">
    <text>Substrate of transglutaminase.</text>
</comment>
<comment type="mass spectrometry"/>
<dbReference type="EMBL" id="AF089867">
    <property type="protein sequence ID" value="AAF19002.1"/>
    <property type="molecule type" value="mRNA"/>
</dbReference>
<dbReference type="SMR" id="Q9U572"/>
<dbReference type="OrthoDB" id="160294at2759"/>
<dbReference type="GO" id="GO:0005576">
    <property type="term" value="C:extracellular region"/>
    <property type="evidence" value="ECO:0007669"/>
    <property type="project" value="UniProtKB-SubCell"/>
</dbReference>
<dbReference type="GO" id="GO:0005319">
    <property type="term" value="F:lipid transporter activity"/>
    <property type="evidence" value="ECO:0007669"/>
    <property type="project" value="InterPro"/>
</dbReference>
<dbReference type="GO" id="GO:0042381">
    <property type="term" value="P:hemolymph coagulation"/>
    <property type="evidence" value="ECO:0000314"/>
    <property type="project" value="UniProtKB"/>
</dbReference>
<dbReference type="Gene3D" id="2.30.230.10">
    <property type="entry name" value="Lipovitellin, beta-sheet shell regions, chain A"/>
    <property type="match status" value="1"/>
</dbReference>
<dbReference type="Gene3D" id="1.25.10.20">
    <property type="entry name" value="Vitellinogen, superhelical"/>
    <property type="match status" value="1"/>
</dbReference>
<dbReference type="InterPro" id="IPR015819">
    <property type="entry name" value="Lipid_transp_b-sht_shell"/>
</dbReference>
<dbReference type="InterPro" id="IPR011030">
    <property type="entry name" value="Lipovitellin_superhlx_dom"/>
</dbReference>
<dbReference type="InterPro" id="IPR015816">
    <property type="entry name" value="Vitellinogen_b-sht_N"/>
</dbReference>
<dbReference type="InterPro" id="IPR050733">
    <property type="entry name" value="Vitellogenin/Apolipophorin"/>
</dbReference>
<dbReference type="InterPro" id="IPR001747">
    <property type="entry name" value="Vitellogenin_N"/>
</dbReference>
<dbReference type="InterPro" id="IPR001846">
    <property type="entry name" value="VWF_type-D"/>
</dbReference>
<dbReference type="PANTHER" id="PTHR23345:SF15">
    <property type="entry name" value="VITELLOGENIN 1-RELATED"/>
    <property type="match status" value="1"/>
</dbReference>
<dbReference type="PANTHER" id="PTHR23345">
    <property type="entry name" value="VITELLOGENIN-RELATED"/>
    <property type="match status" value="1"/>
</dbReference>
<dbReference type="Pfam" id="PF01347">
    <property type="entry name" value="Vitellogenin_N"/>
    <property type="match status" value="1"/>
</dbReference>
<dbReference type="Pfam" id="PF00094">
    <property type="entry name" value="VWD"/>
    <property type="match status" value="1"/>
</dbReference>
<dbReference type="SMART" id="SM00638">
    <property type="entry name" value="LPD_N"/>
    <property type="match status" value="1"/>
</dbReference>
<dbReference type="SMART" id="SM00216">
    <property type="entry name" value="VWD"/>
    <property type="match status" value="1"/>
</dbReference>
<dbReference type="SUPFAM" id="SSF56968">
    <property type="entry name" value="Lipovitellin-phosvitin complex, beta-sheet shell regions"/>
    <property type="match status" value="2"/>
</dbReference>
<dbReference type="SUPFAM" id="SSF48431">
    <property type="entry name" value="Lipovitellin-phosvitin complex, superhelical domain"/>
    <property type="match status" value="1"/>
</dbReference>
<dbReference type="PROSITE" id="PS51211">
    <property type="entry name" value="VITELLOGENIN"/>
    <property type="match status" value="1"/>
</dbReference>
<dbReference type="PROSITE" id="PS51233">
    <property type="entry name" value="VWFD"/>
    <property type="match status" value="1"/>
</dbReference>
<proteinExistence type="evidence at protein level"/>